<dbReference type="EC" id="3.6.5.-" evidence="1"/>
<dbReference type="EMBL" id="AK044371">
    <property type="protein sequence ID" value="BAC31889.1"/>
    <property type="molecule type" value="mRNA"/>
</dbReference>
<dbReference type="EMBL" id="BC027341">
    <property type="protein sequence ID" value="AAH27341.1"/>
    <property type="molecule type" value="mRNA"/>
</dbReference>
<dbReference type="EMBL" id="BC138233">
    <property type="protein sequence ID" value="AAI38234.1"/>
    <property type="molecule type" value="mRNA"/>
</dbReference>
<dbReference type="EMBL" id="BC145208">
    <property type="protein sequence ID" value="AAI45209.1"/>
    <property type="molecule type" value="mRNA"/>
</dbReference>
<dbReference type="CCDS" id="CCDS26708.2">
    <molecule id="Q8R2Q4-1"/>
</dbReference>
<dbReference type="CCDS" id="CCDS70490.1">
    <molecule id="Q8R2Q4-3"/>
</dbReference>
<dbReference type="CCDS" id="CCDS70491.1">
    <molecule id="Q8R2Q4-2"/>
</dbReference>
<dbReference type="RefSeq" id="NP_001139515.1">
    <property type="nucleotide sequence ID" value="NM_001146043.2"/>
</dbReference>
<dbReference type="RefSeq" id="NP_001258392.1">
    <molecule id="Q8R2Q4-1"/>
    <property type="nucleotide sequence ID" value="NM_001271463.1"/>
</dbReference>
<dbReference type="RefSeq" id="NP_001258393.1">
    <molecule id="Q8R2Q4-3"/>
    <property type="nucleotide sequence ID" value="NM_001271464.1"/>
</dbReference>
<dbReference type="RefSeq" id="NP_001258394.1">
    <molecule id="Q8R2Q4-2"/>
    <property type="nucleotide sequence ID" value="NM_001271465.1"/>
</dbReference>
<dbReference type="RefSeq" id="NP_796240.3">
    <molecule id="Q8R2Q4-1"/>
    <property type="nucleotide sequence ID" value="NM_177266.5"/>
</dbReference>
<dbReference type="RefSeq" id="XP_006517752.1">
    <molecule id="Q8R2Q4-1"/>
    <property type="nucleotide sequence ID" value="XM_006517689.5"/>
</dbReference>
<dbReference type="RefSeq" id="XP_006517753.1">
    <molecule id="Q8R2Q4-1"/>
    <property type="nucleotide sequence ID" value="XM_006517690.5"/>
</dbReference>
<dbReference type="RefSeq" id="XP_036013965.1">
    <molecule id="Q8R2Q4-1"/>
    <property type="nucleotide sequence ID" value="XM_036158072.1"/>
</dbReference>
<dbReference type="RefSeq" id="XP_036013966.1">
    <molecule id="Q8R2Q4-3"/>
    <property type="nucleotide sequence ID" value="XM_036158073.1"/>
</dbReference>
<dbReference type="RefSeq" id="XP_036013967.1">
    <molecule id="Q8R2Q4-3"/>
    <property type="nucleotide sequence ID" value="XM_036158074.1"/>
</dbReference>
<dbReference type="SMR" id="Q8R2Q4"/>
<dbReference type="BioGRID" id="236307">
    <property type="interactions" value="11"/>
</dbReference>
<dbReference type="FunCoup" id="Q8R2Q4">
    <property type="interactions" value="1268"/>
</dbReference>
<dbReference type="STRING" id="10090.ENSMUSP00000125656"/>
<dbReference type="GlyGen" id="Q8R2Q4">
    <property type="glycosylation" value="1 site, 1 O-linked glycan (1 site)"/>
</dbReference>
<dbReference type="iPTMnet" id="Q8R2Q4"/>
<dbReference type="PhosphoSitePlus" id="Q8R2Q4"/>
<dbReference type="jPOST" id="Q8R2Q4"/>
<dbReference type="PaxDb" id="10090-ENSMUSP00000125656"/>
<dbReference type="PeptideAtlas" id="Q8R2Q4"/>
<dbReference type="ProteomicsDB" id="299894">
    <molecule id="Q8R2Q4-1"/>
</dbReference>
<dbReference type="ProteomicsDB" id="299895">
    <molecule id="Q8R2Q4-2"/>
</dbReference>
<dbReference type="ProteomicsDB" id="299896">
    <molecule id="Q8R2Q4-3"/>
</dbReference>
<dbReference type="Pumba" id="Q8R2Q4"/>
<dbReference type="Antibodypedia" id="44237">
    <property type="antibodies" value="143 antibodies from 23 providers"/>
</dbReference>
<dbReference type="DNASU" id="320806"/>
<dbReference type="Ensembl" id="ENSMUST00000022170.8">
    <molecule id="Q8R2Q4-2"/>
    <property type="protein sequence ID" value="ENSMUSP00000022170.8"/>
    <property type="gene ID" value="ENSMUSG00000021666.17"/>
</dbReference>
<dbReference type="Ensembl" id="ENSMUST00000042084.13">
    <molecule id="Q8R2Q4-3"/>
    <property type="protein sequence ID" value="ENSMUSP00000048373.7"/>
    <property type="gene ID" value="ENSMUSG00000021666.17"/>
</dbReference>
<dbReference type="Ensembl" id="ENSMUST00000161639.8">
    <molecule id="Q8R2Q4-1"/>
    <property type="protein sequence ID" value="ENSMUSP00000125656.2"/>
    <property type="gene ID" value="ENSMUSG00000021666.17"/>
</dbReference>
<dbReference type="GeneID" id="320806"/>
<dbReference type="KEGG" id="mmu:320806"/>
<dbReference type="UCSC" id="uc007rnu.2">
    <molecule id="Q8R2Q4-1"/>
    <property type="organism name" value="mouse"/>
</dbReference>
<dbReference type="UCSC" id="uc011zdh.1">
    <molecule id="Q8R2Q4-2"/>
    <property type="organism name" value="mouse"/>
</dbReference>
<dbReference type="UCSC" id="uc011zdi.1">
    <molecule id="Q8R2Q4-3"/>
    <property type="organism name" value="mouse"/>
</dbReference>
<dbReference type="AGR" id="MGI:2444783"/>
<dbReference type="CTD" id="84340"/>
<dbReference type="MGI" id="MGI:2444783">
    <property type="gene designation" value="Gfm2"/>
</dbReference>
<dbReference type="VEuPathDB" id="HostDB:ENSMUSG00000021666"/>
<dbReference type="eggNOG" id="KOG0464">
    <property type="taxonomic scope" value="Eukaryota"/>
</dbReference>
<dbReference type="GeneTree" id="ENSGT00550000074890"/>
<dbReference type="HOGENOM" id="CLU_002794_4_1_1"/>
<dbReference type="InParanoid" id="Q8R2Q4"/>
<dbReference type="OMA" id="GPQFTFP"/>
<dbReference type="OrthoDB" id="198619at2759"/>
<dbReference type="PhylomeDB" id="Q8R2Q4"/>
<dbReference type="TreeFam" id="TF314848"/>
<dbReference type="Reactome" id="R-MMU-5419276">
    <property type="pathway name" value="Mitochondrial translation termination"/>
</dbReference>
<dbReference type="BioGRID-ORCS" id="320806">
    <property type="hits" value="19 hits in 74 CRISPR screens"/>
</dbReference>
<dbReference type="ChiTaRS" id="Gfm2">
    <property type="organism name" value="mouse"/>
</dbReference>
<dbReference type="PRO" id="PR:Q8R2Q4"/>
<dbReference type="Proteomes" id="UP000000589">
    <property type="component" value="Chromosome 13"/>
</dbReference>
<dbReference type="RNAct" id="Q8R2Q4">
    <property type="molecule type" value="protein"/>
</dbReference>
<dbReference type="Bgee" id="ENSMUSG00000021666">
    <property type="expression patterns" value="Expressed in hindlimb stylopod muscle and 243 other cell types or tissues"/>
</dbReference>
<dbReference type="ExpressionAtlas" id="Q8R2Q4">
    <property type="expression patterns" value="baseline and differential"/>
</dbReference>
<dbReference type="GO" id="GO:0005739">
    <property type="term" value="C:mitochondrion"/>
    <property type="evidence" value="ECO:0007005"/>
    <property type="project" value="MGI"/>
</dbReference>
<dbReference type="GO" id="GO:0005525">
    <property type="term" value="F:GTP binding"/>
    <property type="evidence" value="ECO:0007669"/>
    <property type="project" value="UniProtKB-UniRule"/>
</dbReference>
<dbReference type="GO" id="GO:0003924">
    <property type="term" value="F:GTPase activity"/>
    <property type="evidence" value="ECO:0000250"/>
    <property type="project" value="UniProtKB"/>
</dbReference>
<dbReference type="GO" id="GO:0032543">
    <property type="term" value="P:mitochondrial translation"/>
    <property type="evidence" value="ECO:0000250"/>
    <property type="project" value="UniProtKB"/>
</dbReference>
<dbReference type="GO" id="GO:0032790">
    <property type="term" value="P:ribosome disassembly"/>
    <property type="evidence" value="ECO:0000250"/>
    <property type="project" value="UniProtKB"/>
</dbReference>
<dbReference type="CDD" id="cd01886">
    <property type="entry name" value="EF-G"/>
    <property type="match status" value="1"/>
</dbReference>
<dbReference type="CDD" id="cd16262">
    <property type="entry name" value="EFG_III"/>
    <property type="match status" value="1"/>
</dbReference>
<dbReference type="CDD" id="cd03713">
    <property type="entry name" value="EFG_mtEFG_C"/>
    <property type="match status" value="1"/>
</dbReference>
<dbReference type="CDD" id="cd04092">
    <property type="entry name" value="mtEFG2_II_like"/>
    <property type="match status" value="1"/>
</dbReference>
<dbReference type="CDD" id="cd01693">
    <property type="entry name" value="mtEFG2_like_IV"/>
    <property type="match status" value="1"/>
</dbReference>
<dbReference type="FunFam" id="2.40.30.10:FF:000053">
    <property type="entry name" value="Ribosome-releasing factor 2, mitochondrial"/>
    <property type="match status" value="1"/>
</dbReference>
<dbReference type="FunFam" id="3.30.230.10:FF:000033">
    <property type="entry name" value="Ribosome-releasing factor 2, mitochondrial"/>
    <property type="match status" value="1"/>
</dbReference>
<dbReference type="FunFam" id="3.30.70.240:FF:000008">
    <property type="entry name" value="Ribosome-releasing factor 2, mitochondrial"/>
    <property type="match status" value="1"/>
</dbReference>
<dbReference type="FunFam" id="3.30.70.870:FF:000005">
    <property type="entry name" value="Ribosome-releasing factor 2, mitochondrial"/>
    <property type="match status" value="1"/>
</dbReference>
<dbReference type="FunFam" id="3.40.50.300:FF:000514">
    <property type="entry name" value="Ribosome-releasing factor 2, mitochondrial"/>
    <property type="match status" value="1"/>
</dbReference>
<dbReference type="Gene3D" id="3.30.230.10">
    <property type="match status" value="1"/>
</dbReference>
<dbReference type="Gene3D" id="3.30.70.240">
    <property type="match status" value="1"/>
</dbReference>
<dbReference type="Gene3D" id="3.30.70.870">
    <property type="entry name" value="Elongation Factor G (Translational Gtpase), domain 3"/>
    <property type="match status" value="1"/>
</dbReference>
<dbReference type="Gene3D" id="3.40.50.300">
    <property type="entry name" value="P-loop containing nucleotide triphosphate hydrolases"/>
    <property type="match status" value="1"/>
</dbReference>
<dbReference type="Gene3D" id="2.40.30.10">
    <property type="entry name" value="Translation factors"/>
    <property type="match status" value="1"/>
</dbReference>
<dbReference type="HAMAP" id="MF_03059">
    <property type="entry name" value="mEF_G_2"/>
    <property type="match status" value="1"/>
</dbReference>
<dbReference type="InterPro" id="IPR053905">
    <property type="entry name" value="EF-G-like_DII"/>
</dbReference>
<dbReference type="InterPro" id="IPR030851">
    <property type="entry name" value="EFG2"/>
</dbReference>
<dbReference type="InterPro" id="IPR041095">
    <property type="entry name" value="EFG_II"/>
</dbReference>
<dbReference type="InterPro" id="IPR009022">
    <property type="entry name" value="EFG_III"/>
</dbReference>
<dbReference type="InterPro" id="IPR035647">
    <property type="entry name" value="EFG_III/V"/>
</dbReference>
<dbReference type="InterPro" id="IPR035649">
    <property type="entry name" value="EFG_V"/>
</dbReference>
<dbReference type="InterPro" id="IPR000640">
    <property type="entry name" value="EFG_V-like"/>
</dbReference>
<dbReference type="InterPro" id="IPR031157">
    <property type="entry name" value="G_TR_CS"/>
</dbReference>
<dbReference type="InterPro" id="IPR027417">
    <property type="entry name" value="P-loop_NTPase"/>
</dbReference>
<dbReference type="InterPro" id="IPR020568">
    <property type="entry name" value="Ribosomal_Su5_D2-typ_SF"/>
</dbReference>
<dbReference type="InterPro" id="IPR014721">
    <property type="entry name" value="Ribsml_uS5_D2-typ_fold_subgr"/>
</dbReference>
<dbReference type="InterPro" id="IPR005225">
    <property type="entry name" value="Small_GTP-bd"/>
</dbReference>
<dbReference type="InterPro" id="IPR000795">
    <property type="entry name" value="T_Tr_GTP-bd_dom"/>
</dbReference>
<dbReference type="InterPro" id="IPR009000">
    <property type="entry name" value="Transl_B-barrel_sf"/>
</dbReference>
<dbReference type="InterPro" id="IPR005517">
    <property type="entry name" value="Transl_elong_EFG/EF2_IV"/>
</dbReference>
<dbReference type="NCBIfam" id="TIGR00231">
    <property type="entry name" value="small_GTP"/>
    <property type="match status" value="1"/>
</dbReference>
<dbReference type="PANTHER" id="PTHR43261:SF1">
    <property type="entry name" value="RIBOSOME-RELEASING FACTOR 2, MITOCHONDRIAL"/>
    <property type="match status" value="1"/>
</dbReference>
<dbReference type="PANTHER" id="PTHR43261">
    <property type="entry name" value="TRANSLATION ELONGATION FACTOR G-RELATED"/>
    <property type="match status" value="1"/>
</dbReference>
<dbReference type="Pfam" id="PF22042">
    <property type="entry name" value="EF-G_D2"/>
    <property type="match status" value="1"/>
</dbReference>
<dbReference type="Pfam" id="PF00679">
    <property type="entry name" value="EFG_C"/>
    <property type="match status" value="1"/>
</dbReference>
<dbReference type="Pfam" id="PF14492">
    <property type="entry name" value="EFG_III"/>
    <property type="match status" value="1"/>
</dbReference>
<dbReference type="Pfam" id="PF03764">
    <property type="entry name" value="EFG_IV"/>
    <property type="match status" value="1"/>
</dbReference>
<dbReference type="Pfam" id="PF00009">
    <property type="entry name" value="GTP_EFTU"/>
    <property type="match status" value="1"/>
</dbReference>
<dbReference type="PRINTS" id="PR00315">
    <property type="entry name" value="ELONGATNFCT"/>
</dbReference>
<dbReference type="SMART" id="SM00838">
    <property type="entry name" value="EFG_C"/>
    <property type="match status" value="1"/>
</dbReference>
<dbReference type="SMART" id="SM00889">
    <property type="entry name" value="EFG_IV"/>
    <property type="match status" value="1"/>
</dbReference>
<dbReference type="SUPFAM" id="SSF54980">
    <property type="entry name" value="EF-G C-terminal domain-like"/>
    <property type="match status" value="2"/>
</dbReference>
<dbReference type="SUPFAM" id="SSF52540">
    <property type="entry name" value="P-loop containing nucleoside triphosphate hydrolases"/>
    <property type="match status" value="1"/>
</dbReference>
<dbReference type="SUPFAM" id="SSF54211">
    <property type="entry name" value="Ribosomal protein S5 domain 2-like"/>
    <property type="match status" value="1"/>
</dbReference>
<dbReference type="SUPFAM" id="SSF50447">
    <property type="entry name" value="Translation proteins"/>
    <property type="match status" value="1"/>
</dbReference>
<dbReference type="PROSITE" id="PS00301">
    <property type="entry name" value="G_TR_1"/>
    <property type="match status" value="1"/>
</dbReference>
<dbReference type="PROSITE" id="PS51722">
    <property type="entry name" value="G_TR_2"/>
    <property type="match status" value="1"/>
</dbReference>
<organism>
    <name type="scientific">Mus musculus</name>
    <name type="common">Mouse</name>
    <dbReference type="NCBI Taxonomy" id="10090"/>
    <lineage>
        <taxon>Eukaryota</taxon>
        <taxon>Metazoa</taxon>
        <taxon>Chordata</taxon>
        <taxon>Craniata</taxon>
        <taxon>Vertebrata</taxon>
        <taxon>Euteleostomi</taxon>
        <taxon>Mammalia</taxon>
        <taxon>Eutheria</taxon>
        <taxon>Euarchontoglires</taxon>
        <taxon>Glires</taxon>
        <taxon>Rodentia</taxon>
        <taxon>Myomorpha</taxon>
        <taxon>Muroidea</taxon>
        <taxon>Muridae</taxon>
        <taxon>Murinae</taxon>
        <taxon>Mus</taxon>
        <taxon>Mus</taxon>
    </lineage>
</organism>
<gene>
    <name type="primary">Gfm2</name>
    <name type="synonym">Efg2</name>
</gene>
<keyword id="KW-0025">Alternative splicing</keyword>
<keyword id="KW-0342">GTP-binding</keyword>
<keyword id="KW-0378">Hydrolase</keyword>
<keyword id="KW-0496">Mitochondrion</keyword>
<keyword id="KW-0547">Nucleotide-binding</keyword>
<keyword id="KW-0648">Protein biosynthesis</keyword>
<keyword id="KW-1185">Reference proteome</keyword>
<comment type="function">
    <text evidence="1">Mitochondrial GTPase that mediates the disassembly of ribosomes from messenger RNA at the termination of mitochondrial protein biosynthesis. Acts in collaboration with MRRF. GTP hydrolysis follows the ribosome disassembly and probably occurs on the ribosome large subunit. Not involved in the GTP-dependent ribosomal translocation step during translation elongation.</text>
</comment>
<comment type="catalytic activity">
    <reaction evidence="1">
        <text>GTP + H2O = GDP + phosphate + H(+)</text>
        <dbReference type="Rhea" id="RHEA:19669"/>
        <dbReference type="ChEBI" id="CHEBI:15377"/>
        <dbReference type="ChEBI" id="CHEBI:15378"/>
        <dbReference type="ChEBI" id="CHEBI:37565"/>
        <dbReference type="ChEBI" id="CHEBI:43474"/>
        <dbReference type="ChEBI" id="CHEBI:58189"/>
    </reaction>
    <physiologicalReaction direction="left-to-right" evidence="1">
        <dbReference type="Rhea" id="RHEA:19670"/>
    </physiologicalReaction>
</comment>
<comment type="subcellular location">
    <subcellularLocation>
        <location evidence="1">Mitochondrion</location>
    </subcellularLocation>
</comment>
<comment type="alternative products">
    <event type="alternative splicing"/>
    <isoform>
        <id>Q8R2Q4-1</id>
        <name>1</name>
        <sequence type="displayed"/>
    </isoform>
    <isoform>
        <id>Q8R2Q4-2</id>
        <name>2</name>
        <sequence type="described" ref="VSP_038195"/>
    </isoform>
    <isoform>
        <id>Q8R2Q4-3</id>
        <name>3</name>
        <sequence type="described" ref="VSP_038196"/>
    </isoform>
</comment>
<comment type="miscellaneous">
    <text evidence="1">This protein may be expected to contain an N-terminal transit peptide but none has been predicted.</text>
</comment>
<comment type="similarity">
    <text evidence="1">Belongs to the TRAFAC class translation factor GTPase superfamily. Classic translation factor GTPase family. EF-G/EF-2 subfamily.</text>
</comment>
<name>RRF2M_MOUSE</name>
<reference key="1">
    <citation type="journal article" date="2005" name="Science">
        <title>The transcriptional landscape of the mammalian genome.</title>
        <authorList>
            <person name="Carninci P."/>
            <person name="Kasukawa T."/>
            <person name="Katayama S."/>
            <person name="Gough J."/>
            <person name="Frith M.C."/>
            <person name="Maeda N."/>
            <person name="Oyama R."/>
            <person name="Ravasi T."/>
            <person name="Lenhard B."/>
            <person name="Wells C."/>
            <person name="Kodzius R."/>
            <person name="Shimokawa K."/>
            <person name="Bajic V.B."/>
            <person name="Brenner S.E."/>
            <person name="Batalov S."/>
            <person name="Forrest A.R."/>
            <person name="Zavolan M."/>
            <person name="Davis M.J."/>
            <person name="Wilming L.G."/>
            <person name="Aidinis V."/>
            <person name="Allen J.E."/>
            <person name="Ambesi-Impiombato A."/>
            <person name="Apweiler R."/>
            <person name="Aturaliya R.N."/>
            <person name="Bailey T.L."/>
            <person name="Bansal M."/>
            <person name="Baxter L."/>
            <person name="Beisel K.W."/>
            <person name="Bersano T."/>
            <person name="Bono H."/>
            <person name="Chalk A.M."/>
            <person name="Chiu K.P."/>
            <person name="Choudhary V."/>
            <person name="Christoffels A."/>
            <person name="Clutterbuck D.R."/>
            <person name="Crowe M.L."/>
            <person name="Dalla E."/>
            <person name="Dalrymple B.P."/>
            <person name="de Bono B."/>
            <person name="Della Gatta G."/>
            <person name="di Bernardo D."/>
            <person name="Down T."/>
            <person name="Engstrom P."/>
            <person name="Fagiolini M."/>
            <person name="Faulkner G."/>
            <person name="Fletcher C.F."/>
            <person name="Fukushima T."/>
            <person name="Furuno M."/>
            <person name="Futaki S."/>
            <person name="Gariboldi M."/>
            <person name="Georgii-Hemming P."/>
            <person name="Gingeras T.R."/>
            <person name="Gojobori T."/>
            <person name="Green R.E."/>
            <person name="Gustincich S."/>
            <person name="Harbers M."/>
            <person name="Hayashi Y."/>
            <person name="Hensch T.K."/>
            <person name="Hirokawa N."/>
            <person name="Hill D."/>
            <person name="Huminiecki L."/>
            <person name="Iacono M."/>
            <person name="Ikeo K."/>
            <person name="Iwama A."/>
            <person name="Ishikawa T."/>
            <person name="Jakt M."/>
            <person name="Kanapin A."/>
            <person name="Katoh M."/>
            <person name="Kawasawa Y."/>
            <person name="Kelso J."/>
            <person name="Kitamura H."/>
            <person name="Kitano H."/>
            <person name="Kollias G."/>
            <person name="Krishnan S.P."/>
            <person name="Kruger A."/>
            <person name="Kummerfeld S.K."/>
            <person name="Kurochkin I.V."/>
            <person name="Lareau L.F."/>
            <person name="Lazarevic D."/>
            <person name="Lipovich L."/>
            <person name="Liu J."/>
            <person name="Liuni S."/>
            <person name="McWilliam S."/>
            <person name="Madan Babu M."/>
            <person name="Madera M."/>
            <person name="Marchionni L."/>
            <person name="Matsuda H."/>
            <person name="Matsuzawa S."/>
            <person name="Miki H."/>
            <person name="Mignone F."/>
            <person name="Miyake S."/>
            <person name="Morris K."/>
            <person name="Mottagui-Tabar S."/>
            <person name="Mulder N."/>
            <person name="Nakano N."/>
            <person name="Nakauchi H."/>
            <person name="Ng P."/>
            <person name="Nilsson R."/>
            <person name="Nishiguchi S."/>
            <person name="Nishikawa S."/>
            <person name="Nori F."/>
            <person name="Ohara O."/>
            <person name="Okazaki Y."/>
            <person name="Orlando V."/>
            <person name="Pang K.C."/>
            <person name="Pavan W.J."/>
            <person name="Pavesi G."/>
            <person name="Pesole G."/>
            <person name="Petrovsky N."/>
            <person name="Piazza S."/>
            <person name="Reed J."/>
            <person name="Reid J.F."/>
            <person name="Ring B.Z."/>
            <person name="Ringwald M."/>
            <person name="Rost B."/>
            <person name="Ruan Y."/>
            <person name="Salzberg S.L."/>
            <person name="Sandelin A."/>
            <person name="Schneider C."/>
            <person name="Schoenbach C."/>
            <person name="Sekiguchi K."/>
            <person name="Semple C.A."/>
            <person name="Seno S."/>
            <person name="Sessa L."/>
            <person name="Sheng Y."/>
            <person name="Shibata Y."/>
            <person name="Shimada H."/>
            <person name="Shimada K."/>
            <person name="Silva D."/>
            <person name="Sinclair B."/>
            <person name="Sperling S."/>
            <person name="Stupka E."/>
            <person name="Sugiura K."/>
            <person name="Sultana R."/>
            <person name="Takenaka Y."/>
            <person name="Taki K."/>
            <person name="Tammoja K."/>
            <person name="Tan S.L."/>
            <person name="Tang S."/>
            <person name="Taylor M.S."/>
            <person name="Tegner J."/>
            <person name="Teichmann S.A."/>
            <person name="Ueda H.R."/>
            <person name="van Nimwegen E."/>
            <person name="Verardo R."/>
            <person name="Wei C.L."/>
            <person name="Yagi K."/>
            <person name="Yamanishi H."/>
            <person name="Zabarovsky E."/>
            <person name="Zhu S."/>
            <person name="Zimmer A."/>
            <person name="Hide W."/>
            <person name="Bult C."/>
            <person name="Grimmond S.M."/>
            <person name="Teasdale R.D."/>
            <person name="Liu E.T."/>
            <person name="Brusic V."/>
            <person name="Quackenbush J."/>
            <person name="Wahlestedt C."/>
            <person name="Mattick J.S."/>
            <person name="Hume D.A."/>
            <person name="Kai C."/>
            <person name="Sasaki D."/>
            <person name="Tomaru Y."/>
            <person name="Fukuda S."/>
            <person name="Kanamori-Katayama M."/>
            <person name="Suzuki M."/>
            <person name="Aoki J."/>
            <person name="Arakawa T."/>
            <person name="Iida J."/>
            <person name="Imamura K."/>
            <person name="Itoh M."/>
            <person name="Kato T."/>
            <person name="Kawaji H."/>
            <person name="Kawagashira N."/>
            <person name="Kawashima T."/>
            <person name="Kojima M."/>
            <person name="Kondo S."/>
            <person name="Konno H."/>
            <person name="Nakano K."/>
            <person name="Ninomiya N."/>
            <person name="Nishio T."/>
            <person name="Okada M."/>
            <person name="Plessy C."/>
            <person name="Shibata K."/>
            <person name="Shiraki T."/>
            <person name="Suzuki S."/>
            <person name="Tagami M."/>
            <person name="Waki K."/>
            <person name="Watahiki A."/>
            <person name="Okamura-Oho Y."/>
            <person name="Suzuki H."/>
            <person name="Kawai J."/>
            <person name="Hayashizaki Y."/>
        </authorList>
    </citation>
    <scope>NUCLEOTIDE SEQUENCE [LARGE SCALE MRNA] (ISOFORM 3)</scope>
    <source>
        <strain>C57BL/6J</strain>
        <tissue>Retina</tissue>
    </source>
</reference>
<reference key="2">
    <citation type="journal article" date="2004" name="Genome Res.">
        <title>The status, quality, and expansion of the NIH full-length cDNA project: the Mammalian Gene Collection (MGC).</title>
        <authorList>
            <consortium name="The MGC Project Team"/>
        </authorList>
    </citation>
    <scope>NUCLEOTIDE SEQUENCE [LARGE SCALE MRNA] (ISOFORM 2)</scope>
    <source>
        <tissue>Brain</tissue>
    </source>
</reference>
<reference key="3">
    <citation type="journal article" date="2010" name="Cell">
        <title>A tissue-specific atlas of mouse protein phosphorylation and expression.</title>
        <authorList>
            <person name="Huttlin E.L."/>
            <person name="Jedrychowski M.P."/>
            <person name="Elias J.E."/>
            <person name="Goswami T."/>
            <person name="Rad R."/>
            <person name="Beausoleil S.A."/>
            <person name="Villen J."/>
            <person name="Haas W."/>
            <person name="Sowa M.E."/>
            <person name="Gygi S.P."/>
        </authorList>
    </citation>
    <scope>IDENTIFICATION BY MASS SPECTROMETRY [LARGE SCALE ANALYSIS]</scope>
    <source>
        <tissue>Brain</tissue>
        <tissue>Brown adipose tissue</tissue>
        <tissue>Heart</tissue>
        <tissue>Kidney</tissue>
        <tissue>Liver</tissue>
        <tissue>Pancreas</tissue>
        <tissue>Spleen</tissue>
        <tissue>Testis</tissue>
    </source>
</reference>
<accession>Q8R2Q4</accession>
<accession>B2RR55</accession>
<accession>Q8BXS5</accession>
<proteinExistence type="evidence at protein level"/>
<sequence>MFTKWRIFAVNHQRTFSVHLNTMCYCKIKANLKRLKTQLPLTRNYSSAPGIAGSDVKSLHSVINPPVAKIRNIGIMAHIDAGKTTTTERILYYSGYTRSLGDVDDGDTVTDFMAQERERGITIQSAAVTLDWKGYRVNLIDTPGHVDFTLEVERCLRVLDGAVAVFDASAGVEAQTLTVWRQADKHKIPRICFLNKMDKTGASFNYAVESIREKLKAKPLILQLPIGEARTFQGVVDVVNKEKLLWNSNSDDGKDFERMPLSEASDRELLKETIEARNSLIEQVADLDDEFADLVLGEFSENFDLVPAEKLQAAVHRVTLAQAAVPVLCGSALKNKGVQPLLDAVTTYLPSPEEREDRFLQWYEGDLCALAFKVLHDKQRGPLVFLRIYSGTLTPQLAVHNINRNCTERMSRLLLPFADQHVEIPSLTAGNIALTVGLKQTATGDTIVSSKSSALAAARRAGRGEREHGKKREAESLLLAGVEVPEPVFFCTIEPPSVAKQPDLDHALERLQREDPSLKVKLDPDSGQTVLCGMGELHIEIIHDRIKREYGLETYLGPLQVAYRETILNSVRATDTLDRVLGDKRHLVSAELEVRPAEEPCAVAKIEYADCVGEDLLQASREAIESAVHSACLQGPLLGSPVQDVAMTLHSLMIHPGTSTTMVTACISRCMQKALKKADKQVLEPLMSLEVTVSREYLSPVLADLAQRRGNIQEIQTRQDNRVVLGFVPLAEIMGYSTVLRTLTSGSATFALELSTYQAMSPQDQSALLNQRSGLAHVL</sequence>
<evidence type="ECO:0000255" key="1">
    <source>
        <dbReference type="HAMAP-Rule" id="MF_03059"/>
    </source>
</evidence>
<evidence type="ECO:0000303" key="2">
    <source>
    </source>
</evidence>
<evidence type="ECO:0000303" key="3">
    <source>
    </source>
</evidence>
<evidence type="ECO:0000305" key="4"/>
<protein>
    <recommendedName>
        <fullName evidence="1">Ribosome-releasing factor 2, mitochondrial</fullName>
        <shortName evidence="1">RRF2mt</shortName>
        <ecNumber evidence="1">3.6.5.-</ecNumber>
    </recommendedName>
    <alternativeName>
        <fullName evidence="1">Elongation factor G 2, mitochondrial</fullName>
        <shortName evidence="1">EF-G2mt</shortName>
        <shortName evidence="1">mEF-G 2</shortName>
    </alternativeName>
</protein>
<feature type="chain" id="PRO_0000007451" description="Ribosome-releasing factor 2, mitochondrial">
    <location>
        <begin position="1"/>
        <end position="779"/>
    </location>
</feature>
<feature type="domain" description="tr-type G">
    <location>
        <begin position="68"/>
        <end position="353"/>
    </location>
</feature>
<feature type="binding site" evidence="1">
    <location>
        <begin position="77"/>
        <end position="84"/>
    </location>
    <ligand>
        <name>GTP</name>
        <dbReference type="ChEBI" id="CHEBI:37565"/>
    </ligand>
</feature>
<feature type="binding site" evidence="1">
    <location>
        <begin position="141"/>
        <end position="145"/>
    </location>
    <ligand>
        <name>GTP</name>
        <dbReference type="ChEBI" id="CHEBI:37565"/>
    </ligand>
</feature>
<feature type="binding site" evidence="1">
    <location>
        <begin position="195"/>
        <end position="198"/>
    </location>
    <ligand>
        <name>GTP</name>
        <dbReference type="ChEBI" id="CHEBI:37565"/>
    </ligand>
</feature>
<feature type="splice variant" id="VSP_038195" description="In isoform 2." evidence="2">
    <location>
        <begin position="50"/>
        <end position="51"/>
    </location>
</feature>
<feature type="splice variant" id="VSP_038196" description="In isoform 3." evidence="3">
    <location>
        <begin position="284"/>
        <end position="310"/>
    </location>
</feature>
<feature type="sequence conflict" description="In Ref. 2; AAH27341." evidence="4" ref="2">
    <original>L</original>
    <variation>V</variation>
    <location>
        <position position="245"/>
    </location>
</feature>
<feature type="sequence conflict" description="In Ref. 2; AAH27341." evidence="4" ref="2">
    <original>K</original>
    <variation>T</variation>
    <location>
        <position position="680"/>
    </location>
</feature>
<feature type="sequence conflict" description="In Ref. 2; AAH27341." evidence="4" ref="2">
    <original>H</original>
    <variation>R</variation>
    <location>
        <position position="777"/>
    </location>
</feature>